<evidence type="ECO:0000255" key="1">
    <source>
        <dbReference type="HAMAP-Rule" id="MF_00171"/>
    </source>
</evidence>
<reference key="1">
    <citation type="journal article" date="2003" name="Lancet">
        <title>Genome sequence of Vibrio parahaemolyticus: a pathogenic mechanism distinct from that of V. cholerae.</title>
        <authorList>
            <person name="Makino K."/>
            <person name="Oshima K."/>
            <person name="Kurokawa K."/>
            <person name="Yokoyama K."/>
            <person name="Uda T."/>
            <person name="Tagomori K."/>
            <person name="Iijima Y."/>
            <person name="Najima M."/>
            <person name="Nakano M."/>
            <person name="Yamashita A."/>
            <person name="Kubota Y."/>
            <person name="Kimura S."/>
            <person name="Yasunaga T."/>
            <person name="Honda T."/>
            <person name="Shinagawa H."/>
            <person name="Hattori M."/>
            <person name="Iida T."/>
        </authorList>
    </citation>
    <scope>NUCLEOTIDE SEQUENCE [LARGE SCALE GENOMIC DNA]</scope>
    <source>
        <strain>RIMD 2210633</strain>
    </source>
</reference>
<organism>
    <name type="scientific">Vibrio parahaemolyticus serotype O3:K6 (strain RIMD 2210633)</name>
    <dbReference type="NCBI Taxonomy" id="223926"/>
    <lineage>
        <taxon>Bacteria</taxon>
        <taxon>Pseudomonadati</taxon>
        <taxon>Pseudomonadota</taxon>
        <taxon>Gammaproteobacteria</taxon>
        <taxon>Vibrionales</taxon>
        <taxon>Vibrionaceae</taxon>
        <taxon>Vibrio</taxon>
    </lineage>
</organism>
<protein>
    <recommendedName>
        <fullName evidence="1">tRNA pseudouridine synthase A</fullName>
        <ecNumber evidence="1">5.4.99.12</ecNumber>
    </recommendedName>
    <alternativeName>
        <fullName evidence="1">tRNA pseudouridine(38-40) synthase</fullName>
    </alternativeName>
    <alternativeName>
        <fullName evidence="1">tRNA pseudouridylate synthase I</fullName>
    </alternativeName>
    <alternativeName>
        <fullName evidence="1">tRNA-uridine isomerase I</fullName>
    </alternativeName>
</protein>
<gene>
    <name evidence="1" type="primary">truA</name>
    <name type="ordered locus">VP2190</name>
</gene>
<name>TRUA_VIBPA</name>
<proteinExistence type="inferred from homology"/>
<dbReference type="EC" id="5.4.99.12" evidence="1"/>
<dbReference type="EMBL" id="BA000031">
    <property type="protein sequence ID" value="BAC60453.1"/>
    <property type="molecule type" value="Genomic_DNA"/>
</dbReference>
<dbReference type="RefSeq" id="NP_798569.1">
    <property type="nucleotide sequence ID" value="NC_004603.1"/>
</dbReference>
<dbReference type="RefSeq" id="WP_005479529.1">
    <property type="nucleotide sequence ID" value="NC_004603.1"/>
</dbReference>
<dbReference type="SMR" id="Q87MP1"/>
<dbReference type="GeneID" id="1189703"/>
<dbReference type="KEGG" id="vpa:VP2190"/>
<dbReference type="PATRIC" id="fig|223926.6.peg.2094"/>
<dbReference type="eggNOG" id="COG0101">
    <property type="taxonomic scope" value="Bacteria"/>
</dbReference>
<dbReference type="HOGENOM" id="CLU_014673_0_2_6"/>
<dbReference type="Proteomes" id="UP000002493">
    <property type="component" value="Chromosome 1"/>
</dbReference>
<dbReference type="GO" id="GO:0003723">
    <property type="term" value="F:RNA binding"/>
    <property type="evidence" value="ECO:0007669"/>
    <property type="project" value="InterPro"/>
</dbReference>
<dbReference type="GO" id="GO:0160147">
    <property type="term" value="F:tRNA pseudouridine(38-40) synthase activity"/>
    <property type="evidence" value="ECO:0007669"/>
    <property type="project" value="UniProtKB-EC"/>
</dbReference>
<dbReference type="GO" id="GO:0031119">
    <property type="term" value="P:tRNA pseudouridine synthesis"/>
    <property type="evidence" value="ECO:0007669"/>
    <property type="project" value="UniProtKB-UniRule"/>
</dbReference>
<dbReference type="CDD" id="cd02570">
    <property type="entry name" value="PseudoU_synth_EcTruA"/>
    <property type="match status" value="1"/>
</dbReference>
<dbReference type="FunFam" id="3.30.70.580:FF:000001">
    <property type="entry name" value="tRNA pseudouridine synthase A"/>
    <property type="match status" value="1"/>
</dbReference>
<dbReference type="FunFam" id="3.30.70.660:FF:000001">
    <property type="entry name" value="tRNA pseudouridine synthase A"/>
    <property type="match status" value="1"/>
</dbReference>
<dbReference type="Gene3D" id="3.30.70.660">
    <property type="entry name" value="Pseudouridine synthase I, catalytic domain, C-terminal subdomain"/>
    <property type="match status" value="1"/>
</dbReference>
<dbReference type="Gene3D" id="3.30.70.580">
    <property type="entry name" value="Pseudouridine synthase I, catalytic domain, N-terminal subdomain"/>
    <property type="match status" value="1"/>
</dbReference>
<dbReference type="HAMAP" id="MF_00171">
    <property type="entry name" value="TruA"/>
    <property type="match status" value="1"/>
</dbReference>
<dbReference type="InterPro" id="IPR020103">
    <property type="entry name" value="PsdUridine_synth_cat_dom_sf"/>
</dbReference>
<dbReference type="InterPro" id="IPR001406">
    <property type="entry name" value="PsdUridine_synth_TruA"/>
</dbReference>
<dbReference type="InterPro" id="IPR020097">
    <property type="entry name" value="PsdUridine_synth_TruA_a/b_dom"/>
</dbReference>
<dbReference type="InterPro" id="IPR020095">
    <property type="entry name" value="PsdUridine_synth_TruA_C"/>
</dbReference>
<dbReference type="InterPro" id="IPR020094">
    <property type="entry name" value="TruA/RsuA/RluB/E/F_N"/>
</dbReference>
<dbReference type="NCBIfam" id="TIGR00071">
    <property type="entry name" value="hisT_truA"/>
    <property type="match status" value="1"/>
</dbReference>
<dbReference type="PANTHER" id="PTHR11142">
    <property type="entry name" value="PSEUDOURIDYLATE SYNTHASE"/>
    <property type="match status" value="1"/>
</dbReference>
<dbReference type="PANTHER" id="PTHR11142:SF0">
    <property type="entry name" value="TRNA PSEUDOURIDINE SYNTHASE-LIKE 1"/>
    <property type="match status" value="1"/>
</dbReference>
<dbReference type="Pfam" id="PF01416">
    <property type="entry name" value="PseudoU_synth_1"/>
    <property type="match status" value="2"/>
</dbReference>
<dbReference type="PIRSF" id="PIRSF001430">
    <property type="entry name" value="tRNA_psdUrid_synth"/>
    <property type="match status" value="1"/>
</dbReference>
<dbReference type="SUPFAM" id="SSF55120">
    <property type="entry name" value="Pseudouridine synthase"/>
    <property type="match status" value="1"/>
</dbReference>
<sequence length="264" mass="29808">MRIALGIEYNGTNYFGWQRQREVKSVQEELEKALSIVANHPVEVQCAGRTDAGVHGTGQVVHFDTNVNRKMVAWTMGANANMPSDIAVRWAKEVPDDFHARFSATARRYRYIIFNHALRPGILNSGVSHYHGELDEKKMHEAGQYLLGENDFSSFRAAHCQSLSPCRNLMHLNVTRHGDYVVIDIKANAFVHHMVRNITGSLIKVGRGEEKPEWIKWLLEAKDRKLAGATAKAEGLYLVDVDYPEEFELPCVPIGPLFLPDNLN</sequence>
<accession>Q87MP1</accession>
<feature type="chain" id="PRO_0000057485" description="tRNA pseudouridine synthase A">
    <location>
        <begin position="1"/>
        <end position="264"/>
    </location>
</feature>
<feature type="active site" description="Nucleophile" evidence="1">
    <location>
        <position position="51"/>
    </location>
</feature>
<feature type="binding site" evidence="1">
    <location>
        <position position="109"/>
    </location>
    <ligand>
        <name>substrate</name>
    </ligand>
</feature>
<keyword id="KW-0413">Isomerase</keyword>
<keyword id="KW-0819">tRNA processing</keyword>
<comment type="function">
    <text evidence="1">Formation of pseudouridine at positions 38, 39 and 40 in the anticodon stem and loop of transfer RNAs.</text>
</comment>
<comment type="catalytic activity">
    <reaction evidence="1">
        <text>uridine(38/39/40) in tRNA = pseudouridine(38/39/40) in tRNA</text>
        <dbReference type="Rhea" id="RHEA:22376"/>
        <dbReference type="Rhea" id="RHEA-COMP:10085"/>
        <dbReference type="Rhea" id="RHEA-COMP:10087"/>
        <dbReference type="ChEBI" id="CHEBI:65314"/>
        <dbReference type="ChEBI" id="CHEBI:65315"/>
        <dbReference type="EC" id="5.4.99.12"/>
    </reaction>
</comment>
<comment type="subunit">
    <text evidence="1">Homodimer.</text>
</comment>
<comment type="similarity">
    <text evidence="1">Belongs to the tRNA pseudouridine synthase TruA family.</text>
</comment>